<comment type="function">
    <text evidence="1 3">Dermonecrotic toxins cleave the phosphodiester linkage between the phosphate and headgroup of certain phospholipids (sphingolipid and lysolipid substrates), forming an alcohol (often choline) and a cyclic phosphate (By similarity). This toxin acts on sphingomyelin (SM) (By similarity). It may also act on ceramide phosphoethanolamine (CPE), lysophosphatidylcholine (LPC) and lysophosphatidylethanolamine (LPE), but not on lysophosphatidylserine (LPS), and lysophosphatidylglycerol (LPG) (By similarity). It acts by transphosphatidylation, releasing exclusively cyclic phosphate products as second products (By similarity). Induces dermonecrosis, hemolysis, increased vascular permeability, edema, inflammatory response, and platelet aggregation (By similarity).</text>
</comment>
<comment type="catalytic activity">
    <reaction evidence="1">
        <text>an N-(acyl)-sphingosylphosphocholine = an N-(acyl)-sphingosyl-1,3-cyclic phosphate + choline</text>
        <dbReference type="Rhea" id="RHEA:60652"/>
        <dbReference type="ChEBI" id="CHEBI:15354"/>
        <dbReference type="ChEBI" id="CHEBI:64583"/>
        <dbReference type="ChEBI" id="CHEBI:143892"/>
    </reaction>
</comment>
<comment type="catalytic activity">
    <reaction evidence="1">
        <text>an N-(acyl)-sphingosylphosphoethanolamine = an N-(acyl)-sphingosyl-1,3-cyclic phosphate + ethanolamine</text>
        <dbReference type="Rhea" id="RHEA:60648"/>
        <dbReference type="ChEBI" id="CHEBI:57603"/>
        <dbReference type="ChEBI" id="CHEBI:143891"/>
        <dbReference type="ChEBI" id="CHEBI:143892"/>
    </reaction>
</comment>
<comment type="catalytic activity">
    <reaction evidence="1">
        <text>a 1-acyl-sn-glycero-3-phosphocholine = a 1-acyl-sn-glycero-2,3-cyclic phosphate + choline</text>
        <dbReference type="Rhea" id="RHEA:60700"/>
        <dbReference type="ChEBI" id="CHEBI:15354"/>
        <dbReference type="ChEBI" id="CHEBI:58168"/>
        <dbReference type="ChEBI" id="CHEBI:143947"/>
    </reaction>
</comment>
<comment type="catalytic activity">
    <reaction evidence="1">
        <text>a 1-acyl-sn-glycero-3-phosphoethanolamine = a 1-acyl-sn-glycero-2,3-cyclic phosphate + ethanolamine</text>
        <dbReference type="Rhea" id="RHEA:60704"/>
        <dbReference type="ChEBI" id="CHEBI:57603"/>
        <dbReference type="ChEBI" id="CHEBI:64381"/>
        <dbReference type="ChEBI" id="CHEBI:143947"/>
    </reaction>
</comment>
<comment type="cofactor">
    <cofactor evidence="5">
        <name>Mg(2+)</name>
        <dbReference type="ChEBI" id="CHEBI:18420"/>
    </cofactor>
    <text evidence="5">Binds 1 Mg(2+) ion per subunit.</text>
</comment>
<comment type="subcellular location">
    <subcellularLocation>
        <location evidence="8">Secreted</location>
    </subcellularLocation>
</comment>
<comment type="tissue specificity">
    <text evidence="8">Expressed by the venom gland.</text>
</comment>
<comment type="similarity">
    <text evidence="7">Belongs to the arthropod phospholipase D family. Class II subfamily.</text>
</comment>
<comment type="caution">
    <text evidence="1 2 4">The most common activity assay for dermonecrotic toxins detects enzymatic activity by monitoring choline release from substrate. Liberation of choline from sphingomyelin (SM) or lysophosphatidylcholine (LPC) is commonly assumed to result from substrate hydrolysis, giving either ceramide-1-phosphate (C1P) or lysophosphatidic acid (LPA), respectively, as a second product. However, two studies from Lajoie and colleagues (2013 and 2015) report the observation of exclusive formation of cyclic phosphate products as second products, resulting from intramolecular transphosphatidylation. Cyclic phosphates have vastly different biological properties from their monoester counterparts, and they may be relevant to the pathology of brown spider envenomation.</text>
</comment>
<accession>C0JB67</accession>
<evidence type="ECO:0000250" key="1">
    <source>
        <dbReference type="UniProtKB" id="A0A0D4WTV1"/>
    </source>
</evidence>
<evidence type="ECO:0000250" key="2">
    <source>
        <dbReference type="UniProtKB" id="A0A0D4WV12"/>
    </source>
</evidence>
<evidence type="ECO:0000250" key="3">
    <source>
        <dbReference type="UniProtKB" id="P0CE80"/>
    </source>
</evidence>
<evidence type="ECO:0000250" key="4">
    <source>
        <dbReference type="UniProtKB" id="Q4ZFU2"/>
    </source>
</evidence>
<evidence type="ECO:0000250" key="5">
    <source>
        <dbReference type="UniProtKB" id="Q8I914"/>
    </source>
</evidence>
<evidence type="ECO:0000303" key="6">
    <source>
    </source>
</evidence>
<evidence type="ECO:0000305" key="7"/>
<evidence type="ECO:0000305" key="8">
    <source>
    </source>
</evidence>
<keyword id="KW-0204">Cytolysis</keyword>
<keyword id="KW-1061">Dermonecrotic toxin</keyword>
<keyword id="KW-1015">Disulfide bond</keyword>
<keyword id="KW-0354">Hemolysis</keyword>
<keyword id="KW-0442">Lipid degradation</keyword>
<keyword id="KW-0443">Lipid metabolism</keyword>
<keyword id="KW-0456">Lyase</keyword>
<keyword id="KW-0460">Magnesium</keyword>
<keyword id="KW-0479">Metal-binding</keyword>
<keyword id="KW-0964">Secreted</keyword>
<keyword id="KW-0800">Toxin</keyword>
<dbReference type="EC" id="4.6.1.-" evidence="4"/>
<dbReference type="EMBL" id="FJ171502">
    <property type="protein sequence ID" value="ACN48998.1"/>
    <property type="molecule type" value="mRNA"/>
</dbReference>
<dbReference type="SMR" id="C0JB67"/>
<dbReference type="GO" id="GO:0005576">
    <property type="term" value="C:extracellular region"/>
    <property type="evidence" value="ECO:0007669"/>
    <property type="project" value="UniProtKB-SubCell"/>
</dbReference>
<dbReference type="GO" id="GO:0016829">
    <property type="term" value="F:lyase activity"/>
    <property type="evidence" value="ECO:0007669"/>
    <property type="project" value="UniProtKB-KW"/>
</dbReference>
<dbReference type="GO" id="GO:0046872">
    <property type="term" value="F:metal ion binding"/>
    <property type="evidence" value="ECO:0007669"/>
    <property type="project" value="UniProtKB-KW"/>
</dbReference>
<dbReference type="GO" id="GO:0008081">
    <property type="term" value="F:phosphoric diester hydrolase activity"/>
    <property type="evidence" value="ECO:0007669"/>
    <property type="project" value="InterPro"/>
</dbReference>
<dbReference type="GO" id="GO:0090729">
    <property type="term" value="F:toxin activity"/>
    <property type="evidence" value="ECO:0007669"/>
    <property type="project" value="UniProtKB-KW"/>
</dbReference>
<dbReference type="GO" id="GO:0031640">
    <property type="term" value="P:killing of cells of another organism"/>
    <property type="evidence" value="ECO:0007669"/>
    <property type="project" value="UniProtKB-KW"/>
</dbReference>
<dbReference type="GO" id="GO:0016042">
    <property type="term" value="P:lipid catabolic process"/>
    <property type="evidence" value="ECO:0007669"/>
    <property type="project" value="UniProtKB-KW"/>
</dbReference>
<dbReference type="CDD" id="cd08576">
    <property type="entry name" value="GDPD_like_SMaseD_PLD"/>
    <property type="match status" value="1"/>
</dbReference>
<dbReference type="Gene3D" id="3.20.20.190">
    <property type="entry name" value="Phosphatidylinositol (PI) phosphodiesterase"/>
    <property type="match status" value="1"/>
</dbReference>
<dbReference type="InterPro" id="IPR017946">
    <property type="entry name" value="PLC-like_Pdiesterase_TIM-brl"/>
</dbReference>
<dbReference type="SUPFAM" id="SSF51695">
    <property type="entry name" value="PLC-like phosphodiesterases"/>
    <property type="match status" value="1"/>
</dbReference>
<reference key="1">
    <citation type="journal article" date="2009" name="Mol. Biol. Evol.">
        <title>Molecular evolution, functional variation, and proposed nomenclature of the gene family that includes sphingomyelinase D in sicariid spider venoms.</title>
        <authorList>
            <person name="Binford G.J."/>
            <person name="Bodner M.R."/>
            <person name="Cordes M.H."/>
            <person name="Baldwin K.L."/>
            <person name="Rynerson M.R."/>
            <person name="Burns S.N."/>
            <person name="Zobel-Thropp P.A."/>
        </authorList>
    </citation>
    <scope>NUCLEOTIDE SEQUENCE [MRNA]</scope>
    <scope>NOMENCLATURE</scope>
    <source>
        <tissue>Venom gland</tissue>
    </source>
</reference>
<sequence length="275" mass="31621">WIMGHMVNSIEQVDKFLDLGANAIEFDVDFDDDGVAKYTHHGIPCDCGRLCNKYAVFTEYLDYVRQVTTPGDPKFRKELVLLALDLKLQRISSEKAYAAGVDVATKLLDHYWMRGKNGGRAYILLNIPLVKHYEFIRAFKDTLRKEGHEQYNAKVGINFTGNEDLDEIRKVLEKLGEDEHIWQADGIASCIPRGTERLKKVLEKRDTPGYKYISKVYAWTLVRSSIMRRSLSLGVDGVMSNYPDIVVKVLKEKKFSDKFRLATYADNPWEKFTPI</sequence>
<feature type="chain" id="PRO_0000392872" description="Dermonecrotic toxin SpeSicTox-betaIIA1">
    <location>
        <begin position="1" status="less than"/>
        <end position="275"/>
    </location>
</feature>
<feature type="active site" evidence="5">
    <location>
        <position position="5"/>
    </location>
</feature>
<feature type="active site" description="Nucleophile" evidence="5">
    <location>
        <position position="41"/>
    </location>
</feature>
<feature type="binding site" evidence="5">
    <location>
        <position position="25"/>
    </location>
    <ligand>
        <name>Mg(2+)</name>
        <dbReference type="ChEBI" id="CHEBI:18420"/>
    </ligand>
</feature>
<feature type="binding site" evidence="5">
    <location>
        <position position="27"/>
    </location>
    <ligand>
        <name>Mg(2+)</name>
        <dbReference type="ChEBI" id="CHEBI:18420"/>
    </ligand>
</feature>
<feature type="binding site" evidence="5">
    <location>
        <position position="85"/>
    </location>
    <ligand>
        <name>Mg(2+)</name>
        <dbReference type="ChEBI" id="CHEBI:18420"/>
    </ligand>
</feature>
<feature type="disulfide bond" evidence="3">
    <location>
        <begin position="45"/>
        <end position="51"/>
    </location>
</feature>
<feature type="disulfide bond" evidence="3">
    <location>
        <begin position="47"/>
        <end position="190"/>
    </location>
</feature>
<feature type="non-terminal residue">
    <location>
        <position position="1"/>
    </location>
</feature>
<protein>
    <recommendedName>
        <fullName evidence="6">Dermonecrotic toxin SpeSicTox-betaIIA1</fullName>
        <ecNumber evidence="4">4.6.1.-</ecNumber>
    </recommendedName>
    <alternativeName>
        <fullName>Phospholipase D</fullName>
        <shortName>PLD</shortName>
    </alternativeName>
    <alternativeName>
        <fullName>Sphingomyelin phosphodiesterase D</fullName>
        <shortName>SMD</shortName>
        <shortName>SMase D</shortName>
        <shortName>Sphingomyelinase D</shortName>
    </alternativeName>
</protein>
<proteinExistence type="evidence at transcript level"/>
<organism>
    <name type="scientific">Sicarius peruensis</name>
    <name type="common">Six-eyed sand spider</name>
    <dbReference type="NCBI Taxonomy" id="571541"/>
    <lineage>
        <taxon>Eukaryota</taxon>
        <taxon>Metazoa</taxon>
        <taxon>Ecdysozoa</taxon>
        <taxon>Arthropoda</taxon>
        <taxon>Chelicerata</taxon>
        <taxon>Arachnida</taxon>
        <taxon>Araneae</taxon>
        <taxon>Araneomorphae</taxon>
        <taxon>Haplogynae</taxon>
        <taxon>Scytodoidea</taxon>
        <taxon>Sicariidae</taxon>
        <taxon>Sicarius</taxon>
    </lineage>
</organism>
<name>B2H_SICPE</name>